<protein>
    <recommendedName>
        <fullName evidence="1">Porphobilinogen deaminase</fullName>
        <shortName evidence="1">PBG</shortName>
        <ecNumber evidence="1">2.5.1.61</ecNumber>
    </recommendedName>
    <alternativeName>
        <fullName evidence="1">Hydroxymethylbilane synthase</fullName>
        <shortName evidence="1">HMBS</shortName>
    </alternativeName>
    <alternativeName>
        <fullName evidence="1">Pre-uroporphyrinogen synthase</fullName>
    </alternativeName>
</protein>
<feature type="chain" id="PRO_1000047757" description="Porphobilinogen deaminase">
    <location>
        <begin position="1"/>
        <end position="313"/>
    </location>
</feature>
<feature type="modified residue" description="S-(dipyrrolylmethanemethyl)cysteine" evidence="1">
    <location>
        <position position="249"/>
    </location>
</feature>
<keyword id="KW-0627">Porphyrin biosynthesis</keyword>
<keyword id="KW-1185">Reference proteome</keyword>
<keyword id="KW-0808">Transferase</keyword>
<proteinExistence type="inferred from homology"/>
<name>HEM3_PARDP</name>
<gene>
    <name evidence="1" type="primary">hemC</name>
    <name type="ordered locus">Pden_3630</name>
</gene>
<comment type="function">
    <text evidence="1">Tetrapolymerization of the monopyrrole PBG into the hydroxymethylbilane pre-uroporphyrinogen in several discrete steps.</text>
</comment>
<comment type="catalytic activity">
    <reaction evidence="1">
        <text>4 porphobilinogen + H2O = hydroxymethylbilane + 4 NH4(+)</text>
        <dbReference type="Rhea" id="RHEA:13185"/>
        <dbReference type="ChEBI" id="CHEBI:15377"/>
        <dbReference type="ChEBI" id="CHEBI:28938"/>
        <dbReference type="ChEBI" id="CHEBI:57845"/>
        <dbReference type="ChEBI" id="CHEBI:58126"/>
        <dbReference type="EC" id="2.5.1.61"/>
    </reaction>
</comment>
<comment type="cofactor">
    <cofactor evidence="1">
        <name>dipyrromethane</name>
        <dbReference type="ChEBI" id="CHEBI:60342"/>
    </cofactor>
    <text evidence="1">Binds 1 dipyrromethane group covalently.</text>
</comment>
<comment type="pathway">
    <text evidence="1">Porphyrin-containing compound metabolism; protoporphyrin-IX biosynthesis; coproporphyrinogen-III from 5-aminolevulinate: step 2/4.</text>
</comment>
<comment type="subunit">
    <text evidence="1">Monomer.</text>
</comment>
<comment type="miscellaneous">
    <text evidence="1">The porphobilinogen subunits are added to the dipyrromethane group.</text>
</comment>
<comment type="similarity">
    <text evidence="1">Belongs to the HMBS family.</text>
</comment>
<organism>
    <name type="scientific">Paracoccus denitrificans (strain Pd 1222)</name>
    <dbReference type="NCBI Taxonomy" id="318586"/>
    <lineage>
        <taxon>Bacteria</taxon>
        <taxon>Pseudomonadati</taxon>
        <taxon>Pseudomonadota</taxon>
        <taxon>Alphaproteobacteria</taxon>
        <taxon>Rhodobacterales</taxon>
        <taxon>Paracoccaceae</taxon>
        <taxon>Paracoccus</taxon>
    </lineage>
</organism>
<accession>A1B853</accession>
<evidence type="ECO:0000255" key="1">
    <source>
        <dbReference type="HAMAP-Rule" id="MF_00260"/>
    </source>
</evidence>
<reference key="1">
    <citation type="submission" date="2006-12" db="EMBL/GenBank/DDBJ databases">
        <title>Complete sequence of chromosome 2 of Paracoccus denitrificans PD1222.</title>
        <authorList>
            <person name="Copeland A."/>
            <person name="Lucas S."/>
            <person name="Lapidus A."/>
            <person name="Barry K."/>
            <person name="Detter J.C."/>
            <person name="Glavina del Rio T."/>
            <person name="Hammon N."/>
            <person name="Israni S."/>
            <person name="Dalin E."/>
            <person name="Tice H."/>
            <person name="Pitluck S."/>
            <person name="Munk A.C."/>
            <person name="Brettin T."/>
            <person name="Bruce D."/>
            <person name="Han C."/>
            <person name="Tapia R."/>
            <person name="Gilna P."/>
            <person name="Schmutz J."/>
            <person name="Larimer F."/>
            <person name="Land M."/>
            <person name="Hauser L."/>
            <person name="Kyrpides N."/>
            <person name="Lykidis A."/>
            <person name="Spiro S."/>
            <person name="Richardson D.J."/>
            <person name="Moir J.W.B."/>
            <person name="Ferguson S.J."/>
            <person name="van Spanning R.J.M."/>
            <person name="Richardson P."/>
        </authorList>
    </citation>
    <scope>NUCLEOTIDE SEQUENCE [LARGE SCALE GENOMIC DNA]</scope>
    <source>
        <strain>Pd 1222</strain>
    </source>
</reference>
<dbReference type="EC" id="2.5.1.61" evidence="1"/>
<dbReference type="EMBL" id="CP000490">
    <property type="protein sequence ID" value="ABL71697.1"/>
    <property type="molecule type" value="Genomic_DNA"/>
</dbReference>
<dbReference type="RefSeq" id="WP_011749866.1">
    <property type="nucleotide sequence ID" value="NC_008687.1"/>
</dbReference>
<dbReference type="SMR" id="A1B853"/>
<dbReference type="STRING" id="318586.Pden_3630"/>
<dbReference type="EnsemblBacteria" id="ABL71697">
    <property type="protein sequence ID" value="ABL71697"/>
    <property type="gene ID" value="Pden_3630"/>
</dbReference>
<dbReference type="GeneID" id="93453284"/>
<dbReference type="KEGG" id="pde:Pden_3630"/>
<dbReference type="eggNOG" id="COG0181">
    <property type="taxonomic scope" value="Bacteria"/>
</dbReference>
<dbReference type="HOGENOM" id="CLU_019704_1_2_5"/>
<dbReference type="OrthoDB" id="9810298at2"/>
<dbReference type="UniPathway" id="UPA00251">
    <property type="reaction ID" value="UER00319"/>
</dbReference>
<dbReference type="Proteomes" id="UP000000361">
    <property type="component" value="Chromosome 2"/>
</dbReference>
<dbReference type="GO" id="GO:0005737">
    <property type="term" value="C:cytoplasm"/>
    <property type="evidence" value="ECO:0007669"/>
    <property type="project" value="TreeGrafter"/>
</dbReference>
<dbReference type="GO" id="GO:0004418">
    <property type="term" value="F:hydroxymethylbilane synthase activity"/>
    <property type="evidence" value="ECO:0007669"/>
    <property type="project" value="UniProtKB-UniRule"/>
</dbReference>
<dbReference type="GO" id="GO:0006782">
    <property type="term" value="P:protoporphyrinogen IX biosynthetic process"/>
    <property type="evidence" value="ECO:0007669"/>
    <property type="project" value="UniProtKB-UniRule"/>
</dbReference>
<dbReference type="CDD" id="cd13648">
    <property type="entry name" value="PBP2_PBGD_1"/>
    <property type="match status" value="1"/>
</dbReference>
<dbReference type="FunFam" id="3.40.190.10:FF:000004">
    <property type="entry name" value="Porphobilinogen deaminase"/>
    <property type="match status" value="1"/>
</dbReference>
<dbReference type="FunFam" id="3.40.190.10:FF:000005">
    <property type="entry name" value="Porphobilinogen deaminase"/>
    <property type="match status" value="1"/>
</dbReference>
<dbReference type="Gene3D" id="3.40.190.10">
    <property type="entry name" value="Periplasmic binding protein-like II"/>
    <property type="match status" value="2"/>
</dbReference>
<dbReference type="Gene3D" id="3.30.160.40">
    <property type="entry name" value="Porphobilinogen deaminase, C-terminal domain"/>
    <property type="match status" value="1"/>
</dbReference>
<dbReference type="HAMAP" id="MF_00260">
    <property type="entry name" value="Porphobil_deam"/>
    <property type="match status" value="1"/>
</dbReference>
<dbReference type="InterPro" id="IPR000860">
    <property type="entry name" value="HemC"/>
</dbReference>
<dbReference type="InterPro" id="IPR022419">
    <property type="entry name" value="Porphobilin_deaminase_cofac_BS"/>
</dbReference>
<dbReference type="InterPro" id="IPR022417">
    <property type="entry name" value="Porphobilin_deaminase_N"/>
</dbReference>
<dbReference type="InterPro" id="IPR022418">
    <property type="entry name" value="Porphobilinogen_deaminase_C"/>
</dbReference>
<dbReference type="InterPro" id="IPR036803">
    <property type="entry name" value="Porphobilinogen_deaminase_C_sf"/>
</dbReference>
<dbReference type="NCBIfam" id="TIGR00212">
    <property type="entry name" value="hemC"/>
    <property type="match status" value="1"/>
</dbReference>
<dbReference type="PANTHER" id="PTHR11557">
    <property type="entry name" value="PORPHOBILINOGEN DEAMINASE"/>
    <property type="match status" value="1"/>
</dbReference>
<dbReference type="PANTHER" id="PTHR11557:SF0">
    <property type="entry name" value="PORPHOBILINOGEN DEAMINASE"/>
    <property type="match status" value="1"/>
</dbReference>
<dbReference type="Pfam" id="PF01379">
    <property type="entry name" value="Porphobil_deam"/>
    <property type="match status" value="1"/>
</dbReference>
<dbReference type="Pfam" id="PF03900">
    <property type="entry name" value="Porphobil_deamC"/>
    <property type="match status" value="1"/>
</dbReference>
<dbReference type="PIRSF" id="PIRSF001438">
    <property type="entry name" value="4pyrrol_synth_OHMeBilane_synth"/>
    <property type="match status" value="1"/>
</dbReference>
<dbReference type="PRINTS" id="PR00151">
    <property type="entry name" value="PORPHBDMNASE"/>
</dbReference>
<dbReference type="SUPFAM" id="SSF53850">
    <property type="entry name" value="Periplasmic binding protein-like II"/>
    <property type="match status" value="1"/>
</dbReference>
<dbReference type="SUPFAM" id="SSF54782">
    <property type="entry name" value="Porphobilinogen deaminase (hydroxymethylbilane synthase), C-terminal domain"/>
    <property type="match status" value="1"/>
</dbReference>
<dbReference type="PROSITE" id="PS00533">
    <property type="entry name" value="PORPHOBILINOGEN_DEAM"/>
    <property type="match status" value="1"/>
</dbReference>
<sequence length="313" mass="33670">MTQMPDPQNPIRIGTRGSALALAQAHETRDRLMAAHGLAADAFRIVVIKTTGDRVLDRPLKEIGGKGLFTREIEDALLAHEIDIAVHSMKDMPTIQPEGLVIDCYLPREDVRDAFVSAQFAAISELPQGAVVGSSSLRRRAQLAARRPDLKLVEFRGNVQTRLKKLEDGVAVATFLAMAGLTRLGMLHVARGAVEPDEMLPAVAQGCIGVERRADDARTASLLAAISDRDSALRVTAERAFLARLDGSCQTPIAGLAELQGDRLRLRGEILRPDGSEVIAAERVGPAADGAAMGTDLAEELRGRAPADFFDWS</sequence>